<evidence type="ECO:0000255" key="1"/>
<evidence type="ECO:0000269" key="2">
    <source>
    </source>
</evidence>
<evidence type="ECO:0000303" key="3">
    <source>
    </source>
</evidence>
<evidence type="ECO:0000305" key="4"/>
<evidence type="ECO:0000305" key="5">
    <source>
    </source>
</evidence>
<evidence type="ECO:0000312" key="6">
    <source>
        <dbReference type="EMBL" id="CCP46744.1"/>
    </source>
</evidence>
<reference key="1">
    <citation type="journal article" date="1998" name="Nature">
        <title>Deciphering the biology of Mycobacterium tuberculosis from the complete genome sequence.</title>
        <authorList>
            <person name="Cole S.T."/>
            <person name="Brosch R."/>
            <person name="Parkhill J."/>
            <person name="Garnier T."/>
            <person name="Churcher C.M."/>
            <person name="Harris D.E."/>
            <person name="Gordon S.V."/>
            <person name="Eiglmeier K."/>
            <person name="Gas S."/>
            <person name="Barry C.E. III"/>
            <person name="Tekaia F."/>
            <person name="Badcock K."/>
            <person name="Basham D."/>
            <person name="Brown D."/>
            <person name="Chillingworth T."/>
            <person name="Connor R."/>
            <person name="Davies R.M."/>
            <person name="Devlin K."/>
            <person name="Feltwell T."/>
            <person name="Gentles S."/>
            <person name="Hamlin N."/>
            <person name="Holroyd S."/>
            <person name="Hornsby T."/>
            <person name="Jagels K."/>
            <person name="Krogh A."/>
            <person name="McLean J."/>
            <person name="Moule S."/>
            <person name="Murphy L.D."/>
            <person name="Oliver S."/>
            <person name="Osborne J."/>
            <person name="Quail M.A."/>
            <person name="Rajandream M.A."/>
            <person name="Rogers J."/>
            <person name="Rutter S."/>
            <person name="Seeger K."/>
            <person name="Skelton S."/>
            <person name="Squares S."/>
            <person name="Squares R."/>
            <person name="Sulston J.E."/>
            <person name="Taylor K."/>
            <person name="Whitehead S."/>
            <person name="Barrell B.G."/>
        </authorList>
    </citation>
    <scope>NUCLEOTIDE SEQUENCE [LARGE SCALE GENOMIC DNA]</scope>
    <source>
        <strain>ATCC 25618 / H37Rv</strain>
    </source>
</reference>
<reference key="2">
    <citation type="journal article" date="2005" name="Biochim. Biophys. Acta">
        <title>Identification of a novel peptidoglycan hydrolase CwlM in Mycobacterium tuberculosis.</title>
        <authorList>
            <person name="Deng L.L."/>
            <person name="Humphries D.E."/>
            <person name="Arbeit R.D."/>
            <person name="Carlton L.E."/>
            <person name="Smole S.C."/>
            <person name="Carroll J.D."/>
        </authorList>
    </citation>
    <scope>IDENTIFICATION</scope>
    <scope>FUNCTION</scope>
    <scope>CATALYTIC ACTIVITY</scope>
    <scope>BIOPHYSICOCHEMICAL PROPERTIES</scope>
    <scope>PATHWAY</scope>
    <source>
        <strain>BMC 2732386</strain>
    </source>
</reference>
<reference key="3">
    <citation type="journal article" date="2011" name="Mol. Cell. Proteomics">
        <title>Proteogenomic analysis of Mycobacterium tuberculosis by high resolution mass spectrometry.</title>
        <authorList>
            <person name="Kelkar D.S."/>
            <person name="Kumar D."/>
            <person name="Kumar P."/>
            <person name="Balakrishnan L."/>
            <person name="Muthusamy B."/>
            <person name="Yadav A.K."/>
            <person name="Shrivastava P."/>
            <person name="Marimuthu A."/>
            <person name="Anand S."/>
            <person name="Sundaram H."/>
            <person name="Kingsbury R."/>
            <person name="Harsha H.C."/>
            <person name="Nair B."/>
            <person name="Prasad T.S."/>
            <person name="Chauhan D.S."/>
            <person name="Katoch K."/>
            <person name="Katoch V.M."/>
            <person name="Kumar P."/>
            <person name="Chaerkady R."/>
            <person name="Ramachandran S."/>
            <person name="Dash D."/>
            <person name="Pandey A."/>
        </authorList>
    </citation>
    <scope>IDENTIFICATION BY MASS SPECTROMETRY [LARGE SCALE ANALYSIS]</scope>
    <source>
        <strain>ATCC 25618 / H37Rv</strain>
    </source>
</reference>
<protein>
    <recommendedName>
        <fullName evidence="5">N-acetylmuramoyl-L-alanine amidase CwlM</fullName>
        <ecNumber evidence="2">3.5.1.28</ecNumber>
    </recommendedName>
    <alternativeName>
        <fullName evidence="3">Peptidoglycan hydrolase CwlM</fullName>
    </alternativeName>
</protein>
<accession>L7N653</accession>
<accession>I6YHG7</accession>
<organism>
    <name type="scientific">Mycobacterium tuberculosis (strain ATCC 25618 / H37Rv)</name>
    <dbReference type="NCBI Taxonomy" id="83332"/>
    <lineage>
        <taxon>Bacteria</taxon>
        <taxon>Bacillati</taxon>
        <taxon>Actinomycetota</taxon>
        <taxon>Actinomycetes</taxon>
        <taxon>Mycobacteriales</taxon>
        <taxon>Mycobacteriaceae</taxon>
        <taxon>Mycobacterium</taxon>
        <taxon>Mycobacterium tuberculosis complex</taxon>
    </lineage>
</organism>
<dbReference type="EC" id="3.5.1.28" evidence="2"/>
<dbReference type="EMBL" id="AL123456">
    <property type="protein sequence ID" value="CCP46744.1"/>
    <property type="molecule type" value="Genomic_DNA"/>
</dbReference>
<dbReference type="RefSeq" id="WP_003400168.1">
    <property type="nucleotide sequence ID" value="NZ_NVQJ01000005.1"/>
</dbReference>
<dbReference type="RefSeq" id="YP_178027.1">
    <property type="nucleotide sequence ID" value="NC_000962.3"/>
</dbReference>
<dbReference type="SMR" id="L7N653"/>
<dbReference type="STRING" id="83332.Rv3915"/>
<dbReference type="PaxDb" id="83332-Rv3915"/>
<dbReference type="DNASU" id="886250"/>
<dbReference type="GeneID" id="886250"/>
<dbReference type="KEGG" id="mtu:Rv3915"/>
<dbReference type="KEGG" id="mtv:RVBD_3915"/>
<dbReference type="PATRIC" id="fig|83332.111.peg.4360"/>
<dbReference type="TubercuList" id="Rv3915"/>
<dbReference type="eggNOG" id="COG0860">
    <property type="taxonomic scope" value="Bacteria"/>
</dbReference>
<dbReference type="eggNOG" id="COG3409">
    <property type="taxonomic scope" value="Bacteria"/>
</dbReference>
<dbReference type="InParanoid" id="L7N653"/>
<dbReference type="OrthoDB" id="9810670at2"/>
<dbReference type="PhylomeDB" id="L7N653"/>
<dbReference type="UniPathway" id="UPA00549"/>
<dbReference type="Proteomes" id="UP000001584">
    <property type="component" value="Chromosome"/>
</dbReference>
<dbReference type="GO" id="GO:0042597">
    <property type="term" value="C:periplasmic space"/>
    <property type="evidence" value="ECO:0007669"/>
    <property type="project" value="UniProtKB-SubCell"/>
</dbReference>
<dbReference type="GO" id="GO:0008745">
    <property type="term" value="F:N-acetylmuramoyl-L-alanine amidase activity"/>
    <property type="evidence" value="ECO:0007669"/>
    <property type="project" value="UniProtKB-EC"/>
</dbReference>
<dbReference type="GO" id="GO:0016998">
    <property type="term" value="P:cell wall macromolecule catabolic process"/>
    <property type="evidence" value="ECO:0007669"/>
    <property type="project" value="UniProtKB-UniPathway"/>
</dbReference>
<dbReference type="GO" id="GO:0071555">
    <property type="term" value="P:cell wall organization"/>
    <property type="evidence" value="ECO:0007669"/>
    <property type="project" value="UniProtKB-KW"/>
</dbReference>
<dbReference type="GO" id="GO:0009253">
    <property type="term" value="P:peptidoglycan catabolic process"/>
    <property type="evidence" value="ECO:0007669"/>
    <property type="project" value="InterPro"/>
</dbReference>
<dbReference type="CDD" id="cd02696">
    <property type="entry name" value="MurNAc-LAA"/>
    <property type="match status" value="1"/>
</dbReference>
<dbReference type="FunFam" id="1.10.101.10:FF:000004">
    <property type="entry name" value="N-acetylmuramoyl-L-alanine amidase"/>
    <property type="match status" value="1"/>
</dbReference>
<dbReference type="FunFam" id="3.40.630.40:FF:000007">
    <property type="entry name" value="N-acetylmuramoyl-L-alanine amidase"/>
    <property type="match status" value="1"/>
</dbReference>
<dbReference type="FunFam" id="1.10.101.10:FF:000009">
    <property type="entry name" value="Peptidoglycan hydrolase"/>
    <property type="match status" value="1"/>
</dbReference>
<dbReference type="Gene3D" id="1.10.101.10">
    <property type="entry name" value="PGBD-like superfamily/PGBD"/>
    <property type="match status" value="2"/>
</dbReference>
<dbReference type="Gene3D" id="3.40.630.40">
    <property type="entry name" value="Zn-dependent exopeptidases"/>
    <property type="match status" value="1"/>
</dbReference>
<dbReference type="InterPro" id="IPR051922">
    <property type="entry name" value="Bact_Sporulation_Assoc"/>
</dbReference>
<dbReference type="InterPro" id="IPR002508">
    <property type="entry name" value="MurNAc-LAA_cat"/>
</dbReference>
<dbReference type="InterPro" id="IPR002477">
    <property type="entry name" value="Peptidoglycan-bd-like"/>
</dbReference>
<dbReference type="InterPro" id="IPR036365">
    <property type="entry name" value="PGBD-like_sf"/>
</dbReference>
<dbReference type="InterPro" id="IPR036366">
    <property type="entry name" value="PGBDSf"/>
</dbReference>
<dbReference type="PANTHER" id="PTHR30032:SF1">
    <property type="entry name" value="N-ACETYLMURAMOYL-L-ALANINE AMIDASE LYTC"/>
    <property type="match status" value="1"/>
</dbReference>
<dbReference type="PANTHER" id="PTHR30032">
    <property type="entry name" value="N-ACETYLMURAMOYL-L-ALANINE AMIDASE-RELATED"/>
    <property type="match status" value="1"/>
</dbReference>
<dbReference type="Pfam" id="PF01520">
    <property type="entry name" value="Amidase_3"/>
    <property type="match status" value="1"/>
</dbReference>
<dbReference type="Pfam" id="PF01471">
    <property type="entry name" value="PG_binding_1"/>
    <property type="match status" value="2"/>
</dbReference>
<dbReference type="SMART" id="SM00646">
    <property type="entry name" value="Ami_3"/>
    <property type="match status" value="1"/>
</dbReference>
<dbReference type="SUPFAM" id="SSF47090">
    <property type="entry name" value="PGBD-like"/>
    <property type="match status" value="2"/>
</dbReference>
<dbReference type="SUPFAM" id="SSF53187">
    <property type="entry name" value="Zn-dependent exopeptidases"/>
    <property type="match status" value="1"/>
</dbReference>
<sequence>MPSPRREDGDALRCGDRSAAVTEIRAALTALGMLDHQEEDLTTGRNVALELFDAQLDQAVRAFQQHRGLLVDGIVGEATYRALKEASYRLGARTLYHQFGAPLYGDDVATLQARLQDLGFYTGLVDGHFGLQTHNALMSYQREYGLAADGICGPETLRSLYFLSSRVSGGSPHAIREEELVRSSGPKLSGKRIIIDPGRGGVDHGLIAQGPAGPISEADLLWDLASRLEGRMAAIGMETHLSRPTNRSPSDAERAATANAVGADLMISLRCETQTSLAANGVASFHFGNSHGSVSTIGRNLADFIQREVVARTGLRDCRVHGRTWDLLRLTRMPTVQVDIGYITNPHDRGMLVSTQTRDAIAEGILAAVKRLYLLGKNDRPTGTFTFAELLAHELSVERAGRLGGS</sequence>
<comment type="function">
    <text evidence="2">Cell-wall hydrolase that hydrolyzes the amide bond between N-acetylmuramic acid and L-alanine in cell-wall glycopeptides. Is able to lyse whole mycobacteria, release peptidoglycan from the cell wall of M.luteus and M.smegmatis, and cleave N-acetylmuramoyl-L-alanyl-D-isoglutamine, releasing free N-acetylmuramic acid and dipeptide.</text>
</comment>
<comment type="catalytic activity">
    <reaction evidence="2">
        <text>Hydrolyzes the link between N-acetylmuramoyl residues and L-amino acid residues in certain cell-wall glycopeptides.</text>
        <dbReference type="EC" id="3.5.1.28"/>
    </reaction>
</comment>
<comment type="biophysicochemical properties">
    <phDependence>
        <text evidence="2">Optimum pH is 7.5. Activity is greater than 50% of maximal from pH 6.2 to 9.2. Is stable throughout a broad range of pH (6-10).</text>
    </phDependence>
</comment>
<comment type="pathway">
    <text evidence="2">Cell wall degradation; peptidoglycan degradation.</text>
</comment>
<comment type="subcellular location">
    <subcellularLocation>
        <location evidence="5">Periplasm</location>
    </subcellularLocation>
</comment>
<comment type="similarity">
    <text evidence="4">Belongs to the N-acetylmuramoyl-L-alanine amidase 3 family.</text>
</comment>
<feature type="chain" id="PRO_0000434795" description="N-acetylmuramoyl-L-alanine amidase CwlM">
    <location>
        <begin position="1"/>
        <end position="406"/>
    </location>
</feature>
<feature type="domain" description="MurNAc-LAA" evidence="1">
    <location>
        <begin position="193"/>
        <end position="370"/>
    </location>
</feature>
<feature type="region of interest" description="Peptidoglycan-binding domain 1" evidence="5">
    <location>
        <begin position="18"/>
        <end position="83"/>
    </location>
</feature>
<feature type="region of interest" description="Peptidoglycan-binding domain 2" evidence="5">
    <location>
        <begin position="105"/>
        <end position="160"/>
    </location>
</feature>
<name>CWLM_MYCTU</name>
<proteinExistence type="evidence at protein level"/>
<keyword id="KW-0961">Cell wall biogenesis/degradation</keyword>
<keyword id="KW-0378">Hydrolase</keyword>
<keyword id="KW-0574">Periplasm</keyword>
<keyword id="KW-1185">Reference proteome</keyword>
<keyword id="KW-0677">Repeat</keyword>
<gene>
    <name evidence="3" type="primary">cwlM</name>
    <name evidence="6" type="ordered locus">Rv3915</name>
</gene>